<name>ISPH_CHLCH</name>
<gene>
    <name evidence="1" type="primary">ispH</name>
    <name type="ordered locus">Cag_0579</name>
</gene>
<evidence type="ECO:0000255" key="1">
    <source>
        <dbReference type="HAMAP-Rule" id="MF_00191"/>
    </source>
</evidence>
<protein>
    <recommendedName>
        <fullName evidence="1">4-hydroxy-3-methylbut-2-enyl diphosphate reductase</fullName>
        <shortName evidence="1">HMBPP reductase</shortName>
        <ecNumber evidence="1">1.17.7.4</ecNumber>
    </recommendedName>
</protein>
<comment type="function">
    <text evidence="1">Catalyzes the conversion of 1-hydroxy-2-methyl-2-(E)-butenyl 4-diphosphate (HMBPP) into a mixture of isopentenyl diphosphate (IPP) and dimethylallyl diphosphate (DMAPP). Acts in the terminal step of the DOXP/MEP pathway for isoprenoid precursor biosynthesis.</text>
</comment>
<comment type="catalytic activity">
    <reaction evidence="1">
        <text>isopentenyl diphosphate + 2 oxidized [2Fe-2S]-[ferredoxin] + H2O = (2E)-4-hydroxy-3-methylbut-2-enyl diphosphate + 2 reduced [2Fe-2S]-[ferredoxin] + 2 H(+)</text>
        <dbReference type="Rhea" id="RHEA:24488"/>
        <dbReference type="Rhea" id="RHEA-COMP:10000"/>
        <dbReference type="Rhea" id="RHEA-COMP:10001"/>
        <dbReference type="ChEBI" id="CHEBI:15377"/>
        <dbReference type="ChEBI" id="CHEBI:15378"/>
        <dbReference type="ChEBI" id="CHEBI:33737"/>
        <dbReference type="ChEBI" id="CHEBI:33738"/>
        <dbReference type="ChEBI" id="CHEBI:128753"/>
        <dbReference type="ChEBI" id="CHEBI:128769"/>
        <dbReference type="EC" id="1.17.7.4"/>
    </reaction>
</comment>
<comment type="catalytic activity">
    <reaction evidence="1">
        <text>dimethylallyl diphosphate + 2 oxidized [2Fe-2S]-[ferredoxin] + H2O = (2E)-4-hydroxy-3-methylbut-2-enyl diphosphate + 2 reduced [2Fe-2S]-[ferredoxin] + 2 H(+)</text>
        <dbReference type="Rhea" id="RHEA:24825"/>
        <dbReference type="Rhea" id="RHEA-COMP:10000"/>
        <dbReference type="Rhea" id="RHEA-COMP:10001"/>
        <dbReference type="ChEBI" id="CHEBI:15377"/>
        <dbReference type="ChEBI" id="CHEBI:15378"/>
        <dbReference type="ChEBI" id="CHEBI:33737"/>
        <dbReference type="ChEBI" id="CHEBI:33738"/>
        <dbReference type="ChEBI" id="CHEBI:57623"/>
        <dbReference type="ChEBI" id="CHEBI:128753"/>
        <dbReference type="EC" id="1.17.7.4"/>
    </reaction>
</comment>
<comment type="cofactor">
    <cofactor evidence="1">
        <name>[4Fe-4S] cluster</name>
        <dbReference type="ChEBI" id="CHEBI:49883"/>
    </cofactor>
    <text evidence="1">Binds 1 [4Fe-4S] cluster per subunit.</text>
</comment>
<comment type="pathway">
    <text evidence="1">Isoprenoid biosynthesis; dimethylallyl diphosphate biosynthesis; dimethylallyl diphosphate from (2E)-4-hydroxy-3-methylbutenyl diphosphate: step 1/1.</text>
</comment>
<comment type="pathway">
    <text evidence="1">Isoprenoid biosynthesis; isopentenyl diphosphate biosynthesis via DXP pathway; isopentenyl diphosphate from 1-deoxy-D-xylulose 5-phosphate: step 6/6.</text>
</comment>
<comment type="similarity">
    <text evidence="1">Belongs to the IspH family.</text>
</comment>
<dbReference type="EC" id="1.17.7.4" evidence="1"/>
<dbReference type="EMBL" id="CP000108">
    <property type="protein sequence ID" value="ABB27852.1"/>
    <property type="molecule type" value="Genomic_DNA"/>
</dbReference>
<dbReference type="SMR" id="Q3AT23"/>
<dbReference type="STRING" id="340177.Cag_0579"/>
<dbReference type="KEGG" id="cch:Cag_0579"/>
<dbReference type="eggNOG" id="COG0761">
    <property type="taxonomic scope" value="Bacteria"/>
</dbReference>
<dbReference type="HOGENOM" id="CLU_027486_0_1_10"/>
<dbReference type="OrthoDB" id="9777362at2"/>
<dbReference type="UniPathway" id="UPA00056">
    <property type="reaction ID" value="UER00097"/>
</dbReference>
<dbReference type="UniPathway" id="UPA00059">
    <property type="reaction ID" value="UER00105"/>
</dbReference>
<dbReference type="GO" id="GO:0051539">
    <property type="term" value="F:4 iron, 4 sulfur cluster binding"/>
    <property type="evidence" value="ECO:0007669"/>
    <property type="project" value="UniProtKB-UniRule"/>
</dbReference>
<dbReference type="GO" id="GO:0051745">
    <property type="term" value="F:4-hydroxy-3-methylbut-2-enyl diphosphate reductase activity"/>
    <property type="evidence" value="ECO:0007669"/>
    <property type="project" value="UniProtKB-UniRule"/>
</dbReference>
<dbReference type="GO" id="GO:0046872">
    <property type="term" value="F:metal ion binding"/>
    <property type="evidence" value="ECO:0007669"/>
    <property type="project" value="UniProtKB-KW"/>
</dbReference>
<dbReference type="GO" id="GO:0050992">
    <property type="term" value="P:dimethylallyl diphosphate biosynthetic process"/>
    <property type="evidence" value="ECO:0007669"/>
    <property type="project" value="UniProtKB-UniRule"/>
</dbReference>
<dbReference type="GO" id="GO:0019288">
    <property type="term" value="P:isopentenyl diphosphate biosynthetic process, methylerythritol 4-phosphate pathway"/>
    <property type="evidence" value="ECO:0007669"/>
    <property type="project" value="UniProtKB-UniRule"/>
</dbReference>
<dbReference type="GO" id="GO:0016114">
    <property type="term" value="P:terpenoid biosynthetic process"/>
    <property type="evidence" value="ECO:0007669"/>
    <property type="project" value="UniProtKB-UniRule"/>
</dbReference>
<dbReference type="CDD" id="cd13944">
    <property type="entry name" value="lytB_ispH"/>
    <property type="match status" value="1"/>
</dbReference>
<dbReference type="Gene3D" id="3.40.50.11270">
    <property type="match status" value="1"/>
</dbReference>
<dbReference type="Gene3D" id="3.40.1010.20">
    <property type="entry name" value="4-hydroxy-3-methylbut-2-enyl diphosphate reductase, catalytic domain"/>
    <property type="match status" value="2"/>
</dbReference>
<dbReference type="HAMAP" id="MF_00191">
    <property type="entry name" value="IspH"/>
    <property type="match status" value="1"/>
</dbReference>
<dbReference type="InterPro" id="IPR003451">
    <property type="entry name" value="LytB/IspH"/>
</dbReference>
<dbReference type="NCBIfam" id="NF002187">
    <property type="entry name" value="PRK01045.1-1"/>
    <property type="match status" value="1"/>
</dbReference>
<dbReference type="PANTHER" id="PTHR30426">
    <property type="entry name" value="4-HYDROXY-3-METHYLBUT-2-ENYL DIPHOSPHATE REDUCTASE"/>
    <property type="match status" value="1"/>
</dbReference>
<dbReference type="PANTHER" id="PTHR30426:SF0">
    <property type="entry name" value="4-HYDROXY-3-METHYLBUT-2-ENYL DIPHOSPHATE REDUCTASE"/>
    <property type="match status" value="1"/>
</dbReference>
<dbReference type="Pfam" id="PF02401">
    <property type="entry name" value="LYTB"/>
    <property type="match status" value="1"/>
</dbReference>
<accession>Q3AT23</accession>
<feature type="chain" id="PRO_1000021099" description="4-hydroxy-3-methylbut-2-enyl diphosphate reductase">
    <location>
        <begin position="1"/>
        <end position="328"/>
    </location>
</feature>
<feature type="active site" description="Proton donor" evidence="1">
    <location>
        <position position="127"/>
    </location>
</feature>
<feature type="binding site" evidence="1">
    <location>
        <position position="13"/>
    </location>
    <ligand>
        <name>[4Fe-4S] cluster</name>
        <dbReference type="ChEBI" id="CHEBI:49883"/>
    </ligand>
</feature>
<feature type="binding site" evidence="1">
    <location>
        <position position="41"/>
    </location>
    <ligand>
        <name>(2E)-4-hydroxy-3-methylbut-2-enyl diphosphate</name>
        <dbReference type="ChEBI" id="CHEBI:128753"/>
    </ligand>
</feature>
<feature type="binding site" evidence="1">
    <location>
        <position position="41"/>
    </location>
    <ligand>
        <name>dimethylallyl diphosphate</name>
        <dbReference type="ChEBI" id="CHEBI:57623"/>
    </ligand>
</feature>
<feature type="binding site" evidence="1">
    <location>
        <position position="41"/>
    </location>
    <ligand>
        <name>isopentenyl diphosphate</name>
        <dbReference type="ChEBI" id="CHEBI:128769"/>
    </ligand>
</feature>
<feature type="binding site" evidence="1">
    <location>
        <position position="75"/>
    </location>
    <ligand>
        <name>(2E)-4-hydroxy-3-methylbut-2-enyl diphosphate</name>
        <dbReference type="ChEBI" id="CHEBI:128753"/>
    </ligand>
</feature>
<feature type="binding site" evidence="1">
    <location>
        <position position="75"/>
    </location>
    <ligand>
        <name>dimethylallyl diphosphate</name>
        <dbReference type="ChEBI" id="CHEBI:57623"/>
    </ligand>
</feature>
<feature type="binding site" evidence="1">
    <location>
        <position position="75"/>
    </location>
    <ligand>
        <name>isopentenyl diphosphate</name>
        <dbReference type="ChEBI" id="CHEBI:128769"/>
    </ligand>
</feature>
<feature type="binding site" evidence="1">
    <location>
        <position position="97"/>
    </location>
    <ligand>
        <name>[4Fe-4S] cluster</name>
        <dbReference type="ChEBI" id="CHEBI:49883"/>
    </ligand>
</feature>
<feature type="binding site" evidence="1">
    <location>
        <position position="125"/>
    </location>
    <ligand>
        <name>(2E)-4-hydroxy-3-methylbut-2-enyl diphosphate</name>
        <dbReference type="ChEBI" id="CHEBI:128753"/>
    </ligand>
</feature>
<feature type="binding site" evidence="1">
    <location>
        <position position="125"/>
    </location>
    <ligand>
        <name>dimethylallyl diphosphate</name>
        <dbReference type="ChEBI" id="CHEBI:57623"/>
    </ligand>
</feature>
<feature type="binding site" evidence="1">
    <location>
        <position position="125"/>
    </location>
    <ligand>
        <name>isopentenyl diphosphate</name>
        <dbReference type="ChEBI" id="CHEBI:128769"/>
    </ligand>
</feature>
<feature type="binding site" evidence="1">
    <location>
        <position position="168"/>
    </location>
    <ligand>
        <name>(2E)-4-hydroxy-3-methylbut-2-enyl diphosphate</name>
        <dbReference type="ChEBI" id="CHEBI:128753"/>
    </ligand>
</feature>
<feature type="binding site" evidence="1">
    <location>
        <position position="225"/>
    </location>
    <ligand>
        <name>[4Fe-4S] cluster</name>
        <dbReference type="ChEBI" id="CHEBI:49883"/>
    </ligand>
</feature>
<feature type="binding site" evidence="1">
    <location>
        <position position="253"/>
    </location>
    <ligand>
        <name>(2E)-4-hydroxy-3-methylbut-2-enyl diphosphate</name>
        <dbReference type="ChEBI" id="CHEBI:128753"/>
    </ligand>
</feature>
<feature type="binding site" evidence="1">
    <location>
        <position position="253"/>
    </location>
    <ligand>
        <name>dimethylallyl diphosphate</name>
        <dbReference type="ChEBI" id="CHEBI:57623"/>
    </ligand>
</feature>
<feature type="binding site" evidence="1">
    <location>
        <position position="253"/>
    </location>
    <ligand>
        <name>isopentenyl diphosphate</name>
        <dbReference type="ChEBI" id="CHEBI:128769"/>
    </ligand>
</feature>
<feature type="binding site" evidence="1">
    <location>
        <position position="254"/>
    </location>
    <ligand>
        <name>(2E)-4-hydroxy-3-methylbut-2-enyl diphosphate</name>
        <dbReference type="ChEBI" id="CHEBI:128753"/>
    </ligand>
</feature>
<feature type="binding site" evidence="1">
    <location>
        <position position="254"/>
    </location>
    <ligand>
        <name>dimethylallyl diphosphate</name>
        <dbReference type="ChEBI" id="CHEBI:57623"/>
    </ligand>
</feature>
<feature type="binding site" evidence="1">
    <location>
        <position position="254"/>
    </location>
    <ligand>
        <name>isopentenyl diphosphate</name>
        <dbReference type="ChEBI" id="CHEBI:128769"/>
    </ligand>
</feature>
<feature type="binding site" evidence="1">
    <location>
        <position position="255"/>
    </location>
    <ligand>
        <name>(2E)-4-hydroxy-3-methylbut-2-enyl diphosphate</name>
        <dbReference type="ChEBI" id="CHEBI:128753"/>
    </ligand>
</feature>
<feature type="binding site" evidence="1">
    <location>
        <position position="255"/>
    </location>
    <ligand>
        <name>dimethylallyl diphosphate</name>
        <dbReference type="ChEBI" id="CHEBI:57623"/>
    </ligand>
</feature>
<feature type="binding site" evidence="1">
    <location>
        <position position="255"/>
    </location>
    <ligand>
        <name>isopentenyl diphosphate</name>
        <dbReference type="ChEBI" id="CHEBI:128769"/>
    </ligand>
</feature>
<feature type="binding site" evidence="1">
    <location>
        <position position="302"/>
    </location>
    <ligand>
        <name>(2E)-4-hydroxy-3-methylbut-2-enyl diphosphate</name>
        <dbReference type="ChEBI" id="CHEBI:128753"/>
    </ligand>
</feature>
<feature type="binding site" evidence="1">
    <location>
        <position position="302"/>
    </location>
    <ligand>
        <name>dimethylallyl diphosphate</name>
        <dbReference type="ChEBI" id="CHEBI:57623"/>
    </ligand>
</feature>
<feature type="binding site" evidence="1">
    <location>
        <position position="302"/>
    </location>
    <ligand>
        <name>isopentenyl diphosphate</name>
        <dbReference type="ChEBI" id="CHEBI:128769"/>
    </ligand>
</feature>
<keyword id="KW-0004">4Fe-4S</keyword>
<keyword id="KW-0408">Iron</keyword>
<keyword id="KW-0411">Iron-sulfur</keyword>
<keyword id="KW-0414">Isoprene biosynthesis</keyword>
<keyword id="KW-0479">Metal-binding</keyword>
<keyword id="KW-0560">Oxidoreductase</keyword>
<sequence>MKIHLDRTSSGFCIGVQGTINVAEDKLQELGQLYSYGDVVHNEVEVKRLEALGLVTVDDAGFKQLSNTSVLIRAHGEPPATYTIAAENNLAITDTTCPVVSRLQRTTRLLFQLGYQIIIYGKRVHPEVIGLNGQCDNCALIIKHADLSDPKELEGFEPSAKTALISQTTMDIPGFYELKANLEAYVARVNGSAVEPWMAIRDIDITADMSKVRTMPRYVFKDTICRQVSSRNQKLHDFSLANDVVVFVAGKKSSNGQVLFNICKAANPRTFFIEDIEEINPEWFAAHEGKAVESVGICGATSTPMWHLEKVANYIEATYANSESIIAQ</sequence>
<organism>
    <name type="scientific">Chlorobium chlorochromatii (strain CaD3)</name>
    <dbReference type="NCBI Taxonomy" id="340177"/>
    <lineage>
        <taxon>Bacteria</taxon>
        <taxon>Pseudomonadati</taxon>
        <taxon>Chlorobiota</taxon>
        <taxon>Chlorobiia</taxon>
        <taxon>Chlorobiales</taxon>
        <taxon>Chlorobiaceae</taxon>
        <taxon>Chlorobium/Pelodictyon group</taxon>
        <taxon>Chlorobium</taxon>
    </lineage>
</organism>
<proteinExistence type="inferred from homology"/>
<reference key="1">
    <citation type="submission" date="2005-08" db="EMBL/GenBank/DDBJ databases">
        <title>Complete sequence of Chlorobium chlorochromatii CaD3.</title>
        <authorList>
            <consortium name="US DOE Joint Genome Institute"/>
            <person name="Copeland A."/>
            <person name="Lucas S."/>
            <person name="Lapidus A."/>
            <person name="Barry K."/>
            <person name="Detter J.C."/>
            <person name="Glavina T."/>
            <person name="Hammon N."/>
            <person name="Israni S."/>
            <person name="Pitluck S."/>
            <person name="Bryant D."/>
            <person name="Schmutz J."/>
            <person name="Larimer F."/>
            <person name="Land M."/>
            <person name="Kyrpides N."/>
            <person name="Ivanova N."/>
            <person name="Richardson P."/>
        </authorList>
    </citation>
    <scope>NUCLEOTIDE SEQUENCE [LARGE SCALE GENOMIC DNA]</scope>
    <source>
        <strain>CaD3</strain>
    </source>
</reference>